<organism>
    <name type="scientific">Leptospira interrogans serogroup Icterohaemorrhagiae serovar Lai (strain 56601)</name>
    <dbReference type="NCBI Taxonomy" id="189518"/>
    <lineage>
        <taxon>Bacteria</taxon>
        <taxon>Pseudomonadati</taxon>
        <taxon>Spirochaetota</taxon>
        <taxon>Spirochaetia</taxon>
        <taxon>Leptospirales</taxon>
        <taxon>Leptospiraceae</taxon>
        <taxon>Leptospira</taxon>
    </lineage>
</organism>
<dbReference type="EMBL" id="AF434658">
    <property type="protein sequence ID" value="AAN64013.1"/>
    <property type="molecule type" value="Genomic_DNA"/>
</dbReference>
<dbReference type="EMBL" id="AE010300">
    <property type="protein sequence ID" value="AAN47202.1"/>
    <property type="molecule type" value="Genomic_DNA"/>
</dbReference>
<dbReference type="RefSeq" id="NP_710184.1">
    <property type="nucleotide sequence ID" value="NC_004342.2"/>
</dbReference>
<dbReference type="RefSeq" id="WP_000478831.1">
    <property type="nucleotide sequence ID" value="NC_004342.2"/>
</dbReference>
<dbReference type="SMR" id="Q8FA32"/>
<dbReference type="FunCoup" id="Q8FA32">
    <property type="interactions" value="161"/>
</dbReference>
<dbReference type="STRING" id="189518.LA_0003"/>
<dbReference type="PaxDb" id="189518-LA_0003"/>
<dbReference type="EnsemblBacteria" id="AAN47202">
    <property type="protein sequence ID" value="AAN47202"/>
    <property type="gene ID" value="LA_0003"/>
</dbReference>
<dbReference type="KEGG" id="lil:LA_0003"/>
<dbReference type="PATRIC" id="fig|189518.3.peg.7"/>
<dbReference type="HOGENOM" id="CLU_040267_0_1_12"/>
<dbReference type="InParanoid" id="Q8FA32"/>
<dbReference type="OrthoDB" id="9803889at2"/>
<dbReference type="Proteomes" id="UP000001408">
    <property type="component" value="Chromosome I"/>
</dbReference>
<dbReference type="GO" id="GO:0005737">
    <property type="term" value="C:cytoplasm"/>
    <property type="evidence" value="ECO:0007669"/>
    <property type="project" value="UniProtKB-SubCell"/>
</dbReference>
<dbReference type="GO" id="GO:0005524">
    <property type="term" value="F:ATP binding"/>
    <property type="evidence" value="ECO:0007669"/>
    <property type="project" value="UniProtKB-UniRule"/>
</dbReference>
<dbReference type="GO" id="GO:0003697">
    <property type="term" value="F:single-stranded DNA binding"/>
    <property type="evidence" value="ECO:0007669"/>
    <property type="project" value="UniProtKB-UniRule"/>
</dbReference>
<dbReference type="GO" id="GO:0006260">
    <property type="term" value="P:DNA replication"/>
    <property type="evidence" value="ECO:0007669"/>
    <property type="project" value="UniProtKB-UniRule"/>
</dbReference>
<dbReference type="GO" id="GO:0000731">
    <property type="term" value="P:DNA synthesis involved in DNA repair"/>
    <property type="evidence" value="ECO:0000318"/>
    <property type="project" value="GO_Central"/>
</dbReference>
<dbReference type="GO" id="GO:0006302">
    <property type="term" value="P:double-strand break repair"/>
    <property type="evidence" value="ECO:0000318"/>
    <property type="project" value="GO_Central"/>
</dbReference>
<dbReference type="GO" id="GO:0009432">
    <property type="term" value="P:SOS response"/>
    <property type="evidence" value="ECO:0007669"/>
    <property type="project" value="UniProtKB-UniRule"/>
</dbReference>
<dbReference type="Gene3D" id="3.40.50.300">
    <property type="entry name" value="P-loop containing nucleotide triphosphate hydrolases"/>
    <property type="match status" value="1"/>
</dbReference>
<dbReference type="Gene3D" id="1.20.1050.90">
    <property type="entry name" value="RecF/RecN/SMC, N-terminal domain"/>
    <property type="match status" value="1"/>
</dbReference>
<dbReference type="HAMAP" id="MF_00365">
    <property type="entry name" value="RecF"/>
    <property type="match status" value="1"/>
</dbReference>
<dbReference type="InterPro" id="IPR001238">
    <property type="entry name" value="DNA-binding_RecF"/>
</dbReference>
<dbReference type="InterPro" id="IPR018078">
    <property type="entry name" value="DNA-binding_RecF_CS"/>
</dbReference>
<dbReference type="InterPro" id="IPR027417">
    <property type="entry name" value="P-loop_NTPase"/>
</dbReference>
<dbReference type="InterPro" id="IPR003395">
    <property type="entry name" value="RecF/RecN/SMC_N"/>
</dbReference>
<dbReference type="InterPro" id="IPR042174">
    <property type="entry name" value="RecF_2"/>
</dbReference>
<dbReference type="NCBIfam" id="TIGR00611">
    <property type="entry name" value="recf"/>
    <property type="match status" value="1"/>
</dbReference>
<dbReference type="PANTHER" id="PTHR32182">
    <property type="entry name" value="DNA REPLICATION AND REPAIR PROTEIN RECF"/>
    <property type="match status" value="1"/>
</dbReference>
<dbReference type="PANTHER" id="PTHR32182:SF0">
    <property type="entry name" value="DNA REPLICATION AND REPAIR PROTEIN RECF"/>
    <property type="match status" value="1"/>
</dbReference>
<dbReference type="Pfam" id="PF02463">
    <property type="entry name" value="SMC_N"/>
    <property type="match status" value="1"/>
</dbReference>
<dbReference type="SUPFAM" id="SSF52540">
    <property type="entry name" value="P-loop containing nucleoside triphosphate hydrolases"/>
    <property type="match status" value="1"/>
</dbReference>
<dbReference type="PROSITE" id="PS00617">
    <property type="entry name" value="RECF_1"/>
    <property type="match status" value="1"/>
</dbReference>
<dbReference type="PROSITE" id="PS00618">
    <property type="entry name" value="RECF_2"/>
    <property type="match status" value="1"/>
</dbReference>
<accession>Q8FA32</accession>
<accession>Q8GQD4</accession>
<reference key="1">
    <citation type="journal article" date="2002" name="FEMS Microbiol. Lett.">
        <title>Analysis of a Leptospira interrogans locus containing DNA replication genes and a new IS, IS1502.</title>
        <authorList>
            <person name="Zuerner R.L."/>
            <person name="Huang W.M."/>
        </authorList>
    </citation>
    <scope>NUCLEOTIDE SEQUENCE [GENOMIC DNA]</scope>
    <source>
        <strain>Serogroup Pomona</strain>
    </source>
</reference>
<reference key="2">
    <citation type="journal article" date="2003" name="Nature">
        <title>Unique physiological and pathogenic features of Leptospira interrogans revealed by whole-genome sequencing.</title>
        <authorList>
            <person name="Ren S.-X."/>
            <person name="Fu G."/>
            <person name="Jiang X.-G."/>
            <person name="Zeng R."/>
            <person name="Miao Y.-G."/>
            <person name="Xu H."/>
            <person name="Zhang Y.-X."/>
            <person name="Xiong H."/>
            <person name="Lu G."/>
            <person name="Lu L.-F."/>
            <person name="Jiang H.-Q."/>
            <person name="Jia J."/>
            <person name="Tu Y.-F."/>
            <person name="Jiang J.-X."/>
            <person name="Gu W.-Y."/>
            <person name="Zhang Y.-Q."/>
            <person name="Cai Z."/>
            <person name="Sheng H.-H."/>
            <person name="Yin H.-F."/>
            <person name="Zhang Y."/>
            <person name="Zhu G.-F."/>
            <person name="Wan M."/>
            <person name="Huang H.-L."/>
            <person name="Qian Z."/>
            <person name="Wang S.-Y."/>
            <person name="Ma W."/>
            <person name="Yao Z.-J."/>
            <person name="Shen Y."/>
            <person name="Qiang B.-Q."/>
            <person name="Xia Q.-C."/>
            <person name="Guo X.-K."/>
            <person name="Danchin A."/>
            <person name="Saint Girons I."/>
            <person name="Somerville R.L."/>
            <person name="Wen Y.-M."/>
            <person name="Shi M.-H."/>
            <person name="Chen Z."/>
            <person name="Xu J.-G."/>
            <person name="Zhao G.-P."/>
        </authorList>
    </citation>
    <scope>NUCLEOTIDE SEQUENCE [LARGE SCALE GENOMIC DNA]</scope>
    <source>
        <strain>56601</strain>
    </source>
</reference>
<sequence>MFLKHLTIQNFRNHEELSLDFDSRLIFFVGDNGEGKTNLLEAICILSWLKSFRESEDSNLIRWGSENYFLRGKIKDNLKESVLEIGFTSKPSVKRKLKFNQEEIKKRTDLIGKFITVLLTPMDLKIIEGGPAERRKFIDAFISSFDPFYLESLLEYNKILKHRNALLKSGNPDISHLSIWDKKIVEKGIFILNKRREVVLELNSFYRVNLDKLSGGKDGLELIYKPNVKDQDEFLEKLNHNLSRDLRLGYTSVGIHRDDLFIGSDQRDITEFGSQGQKRSTVIALKAATFNYYKNILNTIPVLLIDDVIRELDVKRREYFVDLVVTAGQAFFTTTDLEGIQDYVGKLKDQKQIFLIRQGKVESIK</sequence>
<comment type="function">
    <text evidence="1">The RecF protein is involved in DNA metabolism; it is required for DNA replication and normal SOS inducibility. RecF binds preferentially to single-stranded, linear DNA. It also seems to bind ATP.</text>
</comment>
<comment type="subcellular location">
    <subcellularLocation>
        <location evidence="1">Cytoplasm</location>
    </subcellularLocation>
</comment>
<comment type="similarity">
    <text evidence="1">Belongs to the RecF family.</text>
</comment>
<name>RECF_LEPIN</name>
<proteinExistence type="inferred from homology"/>
<gene>
    <name evidence="1" type="primary">recF</name>
    <name type="ordered locus">LA_0003</name>
</gene>
<keyword id="KW-0067">ATP-binding</keyword>
<keyword id="KW-0963">Cytoplasm</keyword>
<keyword id="KW-0227">DNA damage</keyword>
<keyword id="KW-0234">DNA repair</keyword>
<keyword id="KW-0235">DNA replication</keyword>
<keyword id="KW-0238">DNA-binding</keyword>
<keyword id="KW-0547">Nucleotide-binding</keyword>
<keyword id="KW-1185">Reference proteome</keyword>
<keyword id="KW-0742">SOS response</keyword>
<evidence type="ECO:0000255" key="1">
    <source>
        <dbReference type="HAMAP-Rule" id="MF_00365"/>
    </source>
</evidence>
<evidence type="ECO:0000305" key="2"/>
<feature type="chain" id="PRO_0000196427" description="DNA replication and repair protein RecF">
    <location>
        <begin position="1"/>
        <end position="365"/>
    </location>
</feature>
<feature type="binding site" evidence="1">
    <location>
        <begin position="30"/>
        <end position="37"/>
    </location>
    <ligand>
        <name>ATP</name>
        <dbReference type="ChEBI" id="CHEBI:30616"/>
    </ligand>
</feature>
<feature type="sequence conflict" description="In Ref. 1; AAN64013." evidence="2" ref="1">
    <original>R</original>
    <variation>K</variation>
    <location>
        <position position="207"/>
    </location>
</feature>
<feature type="sequence conflict" description="In Ref. 1; AAN64013." evidence="2" ref="1">
    <original>H</original>
    <variation>R</variation>
    <location>
        <position position="240"/>
    </location>
</feature>
<feature type="sequence conflict" description="In Ref. 1; AAN64013." evidence="2" ref="1">
    <original>S</original>
    <variation>T</variation>
    <location>
        <position position="264"/>
    </location>
</feature>
<feature type="sequence conflict" description="In Ref. 1; AAN64013." evidence="2" ref="1">
    <original>S</original>
    <variation>P</variation>
    <location>
        <position position="363"/>
    </location>
</feature>
<protein>
    <recommendedName>
        <fullName evidence="1">DNA replication and repair protein RecF</fullName>
    </recommendedName>
</protein>